<sequence length="475" mass="53224">MNLETIIGLEVHVELKTNSKIFSASPTEFGAEPNTQTSVIDLGYPGVLPTLNKEAVNFAMKAAMALNCDIATETKFDRKNYFYPDNPKAYQISQFDKPIGENGWIEIEVDGKKKRIGITRLHLEEDAGKSTHTADGSLVDYNRQGMPLIEIVSEPDMRTPEEAYAYLEKLKSIIQYTGVSDCKMEEGSLRCDANISLRPVGQEKFGTKAELKNLNSFTYVQKGLEHEQVRQEKELLSGGIIQQETRRYDEATKKTILMRVKEGSDDYRYFPEPDLVELYIDDEWKEAVRASIPELPDARKARYVAELGLPAYDAHVLTLTKEMSDFFEATVADGADAKLTSNWLMGEVLAYLNKQQKELKDVALTPAGLSKMVQLIEKGTISSKIAKKVFNELIEKGGDPEEIVKAKGLVQISDEGTLRKVVTEILDNNEQSIEDFKNGKDRAIGFLVGQIMKATKGQANPPLVNKILLEEINKR</sequence>
<name>GATB_BACC4</name>
<gene>
    <name evidence="1" type="primary">gatB</name>
    <name type="ordered locus">BCB4264_A0368</name>
</gene>
<keyword id="KW-0067">ATP-binding</keyword>
<keyword id="KW-0436">Ligase</keyword>
<keyword id="KW-0547">Nucleotide-binding</keyword>
<keyword id="KW-0648">Protein biosynthesis</keyword>
<accession>B7H4W3</accession>
<evidence type="ECO:0000255" key="1">
    <source>
        <dbReference type="HAMAP-Rule" id="MF_00121"/>
    </source>
</evidence>
<reference key="1">
    <citation type="submission" date="2008-10" db="EMBL/GenBank/DDBJ databases">
        <title>Genome sequence of Bacillus cereus B4264.</title>
        <authorList>
            <person name="Dodson R.J."/>
            <person name="Durkin A.S."/>
            <person name="Rosovitz M.J."/>
            <person name="Rasko D.A."/>
            <person name="Hoffmaster A."/>
            <person name="Ravel J."/>
            <person name="Sutton G."/>
        </authorList>
    </citation>
    <scope>NUCLEOTIDE SEQUENCE [LARGE SCALE GENOMIC DNA]</scope>
    <source>
        <strain>B4264</strain>
    </source>
</reference>
<protein>
    <recommendedName>
        <fullName evidence="1">Aspartyl/glutamyl-tRNA(Asn/Gln) amidotransferase subunit B</fullName>
        <shortName evidence="1">Asp/Glu-ADT subunit B</shortName>
        <ecNumber evidence="1">6.3.5.-</ecNumber>
    </recommendedName>
</protein>
<proteinExistence type="inferred from homology"/>
<feature type="chain" id="PRO_1000117613" description="Aspartyl/glutamyl-tRNA(Asn/Gln) amidotransferase subunit B">
    <location>
        <begin position="1"/>
        <end position="475"/>
    </location>
</feature>
<dbReference type="EC" id="6.3.5.-" evidence="1"/>
<dbReference type="EMBL" id="CP001176">
    <property type="protein sequence ID" value="ACK63980.1"/>
    <property type="molecule type" value="Genomic_DNA"/>
</dbReference>
<dbReference type="RefSeq" id="WP_001047673.1">
    <property type="nucleotide sequence ID" value="NC_011725.1"/>
</dbReference>
<dbReference type="SMR" id="B7H4W3"/>
<dbReference type="KEGG" id="bcb:BCB4264_A0368"/>
<dbReference type="HOGENOM" id="CLU_019240_0_0_9"/>
<dbReference type="Proteomes" id="UP000007096">
    <property type="component" value="Chromosome"/>
</dbReference>
<dbReference type="GO" id="GO:0050566">
    <property type="term" value="F:asparaginyl-tRNA synthase (glutamine-hydrolyzing) activity"/>
    <property type="evidence" value="ECO:0007669"/>
    <property type="project" value="RHEA"/>
</dbReference>
<dbReference type="GO" id="GO:0005524">
    <property type="term" value="F:ATP binding"/>
    <property type="evidence" value="ECO:0007669"/>
    <property type="project" value="UniProtKB-KW"/>
</dbReference>
<dbReference type="GO" id="GO:0050567">
    <property type="term" value="F:glutaminyl-tRNA synthase (glutamine-hydrolyzing) activity"/>
    <property type="evidence" value="ECO:0007669"/>
    <property type="project" value="UniProtKB-UniRule"/>
</dbReference>
<dbReference type="GO" id="GO:0070681">
    <property type="term" value="P:glutaminyl-tRNAGln biosynthesis via transamidation"/>
    <property type="evidence" value="ECO:0007669"/>
    <property type="project" value="TreeGrafter"/>
</dbReference>
<dbReference type="GO" id="GO:0006412">
    <property type="term" value="P:translation"/>
    <property type="evidence" value="ECO:0007669"/>
    <property type="project" value="UniProtKB-UniRule"/>
</dbReference>
<dbReference type="FunFam" id="1.10.10.410:FF:000001">
    <property type="entry name" value="Aspartyl/glutamyl-tRNA(Asn/Gln) amidotransferase subunit B"/>
    <property type="match status" value="1"/>
</dbReference>
<dbReference type="FunFam" id="1.10.150.380:FF:000001">
    <property type="entry name" value="Aspartyl/glutamyl-tRNA(Asn/Gln) amidotransferase subunit B"/>
    <property type="match status" value="1"/>
</dbReference>
<dbReference type="Gene3D" id="1.10.10.410">
    <property type="match status" value="1"/>
</dbReference>
<dbReference type="Gene3D" id="1.10.150.380">
    <property type="entry name" value="GatB domain, N-terminal subdomain"/>
    <property type="match status" value="1"/>
</dbReference>
<dbReference type="HAMAP" id="MF_00121">
    <property type="entry name" value="GatB"/>
    <property type="match status" value="1"/>
</dbReference>
<dbReference type="InterPro" id="IPR017959">
    <property type="entry name" value="Asn/Gln-tRNA_amidoTrfase_suB/E"/>
</dbReference>
<dbReference type="InterPro" id="IPR006075">
    <property type="entry name" value="Asn/Gln-tRNA_Trfase_suB/E_cat"/>
</dbReference>
<dbReference type="InterPro" id="IPR018027">
    <property type="entry name" value="Asn/Gln_amidotransferase"/>
</dbReference>
<dbReference type="InterPro" id="IPR003789">
    <property type="entry name" value="Asn/Gln_tRNA_amidoTrase-B-like"/>
</dbReference>
<dbReference type="InterPro" id="IPR004413">
    <property type="entry name" value="GatB"/>
</dbReference>
<dbReference type="InterPro" id="IPR042114">
    <property type="entry name" value="GatB_C_1"/>
</dbReference>
<dbReference type="InterPro" id="IPR023168">
    <property type="entry name" value="GatB_Yqey_C_2"/>
</dbReference>
<dbReference type="InterPro" id="IPR017958">
    <property type="entry name" value="Gln-tRNA_amidoTrfase_suB_CS"/>
</dbReference>
<dbReference type="InterPro" id="IPR014746">
    <property type="entry name" value="Gln_synth/guanido_kin_cat_dom"/>
</dbReference>
<dbReference type="NCBIfam" id="TIGR00133">
    <property type="entry name" value="gatB"/>
    <property type="match status" value="1"/>
</dbReference>
<dbReference type="NCBIfam" id="NF004011">
    <property type="entry name" value="PRK05477.1-1"/>
    <property type="match status" value="1"/>
</dbReference>
<dbReference type="NCBIfam" id="NF004012">
    <property type="entry name" value="PRK05477.1-2"/>
    <property type="match status" value="1"/>
</dbReference>
<dbReference type="NCBIfam" id="NF004014">
    <property type="entry name" value="PRK05477.1-4"/>
    <property type="match status" value="1"/>
</dbReference>
<dbReference type="PANTHER" id="PTHR11659">
    <property type="entry name" value="GLUTAMYL-TRNA GLN AMIDOTRANSFERASE SUBUNIT B MITOCHONDRIAL AND PROKARYOTIC PET112-RELATED"/>
    <property type="match status" value="1"/>
</dbReference>
<dbReference type="PANTHER" id="PTHR11659:SF0">
    <property type="entry name" value="GLUTAMYL-TRNA(GLN) AMIDOTRANSFERASE SUBUNIT B, MITOCHONDRIAL"/>
    <property type="match status" value="1"/>
</dbReference>
<dbReference type="Pfam" id="PF02934">
    <property type="entry name" value="GatB_N"/>
    <property type="match status" value="1"/>
</dbReference>
<dbReference type="Pfam" id="PF02637">
    <property type="entry name" value="GatB_Yqey"/>
    <property type="match status" value="1"/>
</dbReference>
<dbReference type="SMART" id="SM00845">
    <property type="entry name" value="GatB_Yqey"/>
    <property type="match status" value="1"/>
</dbReference>
<dbReference type="SUPFAM" id="SSF89095">
    <property type="entry name" value="GatB/YqeY motif"/>
    <property type="match status" value="1"/>
</dbReference>
<dbReference type="SUPFAM" id="SSF55931">
    <property type="entry name" value="Glutamine synthetase/guanido kinase"/>
    <property type="match status" value="1"/>
</dbReference>
<dbReference type="PROSITE" id="PS01234">
    <property type="entry name" value="GATB"/>
    <property type="match status" value="1"/>
</dbReference>
<organism>
    <name type="scientific">Bacillus cereus (strain B4264)</name>
    <dbReference type="NCBI Taxonomy" id="405532"/>
    <lineage>
        <taxon>Bacteria</taxon>
        <taxon>Bacillati</taxon>
        <taxon>Bacillota</taxon>
        <taxon>Bacilli</taxon>
        <taxon>Bacillales</taxon>
        <taxon>Bacillaceae</taxon>
        <taxon>Bacillus</taxon>
        <taxon>Bacillus cereus group</taxon>
    </lineage>
</organism>
<comment type="function">
    <text evidence="1">Allows the formation of correctly charged Asn-tRNA(Asn) or Gln-tRNA(Gln) through the transamidation of misacylated Asp-tRNA(Asn) or Glu-tRNA(Gln) in organisms which lack either or both of asparaginyl-tRNA or glutaminyl-tRNA synthetases. The reaction takes place in the presence of glutamine and ATP through an activated phospho-Asp-tRNA(Asn) or phospho-Glu-tRNA(Gln).</text>
</comment>
<comment type="catalytic activity">
    <reaction evidence="1">
        <text>L-glutamyl-tRNA(Gln) + L-glutamine + ATP + H2O = L-glutaminyl-tRNA(Gln) + L-glutamate + ADP + phosphate + H(+)</text>
        <dbReference type="Rhea" id="RHEA:17521"/>
        <dbReference type="Rhea" id="RHEA-COMP:9681"/>
        <dbReference type="Rhea" id="RHEA-COMP:9684"/>
        <dbReference type="ChEBI" id="CHEBI:15377"/>
        <dbReference type="ChEBI" id="CHEBI:15378"/>
        <dbReference type="ChEBI" id="CHEBI:29985"/>
        <dbReference type="ChEBI" id="CHEBI:30616"/>
        <dbReference type="ChEBI" id="CHEBI:43474"/>
        <dbReference type="ChEBI" id="CHEBI:58359"/>
        <dbReference type="ChEBI" id="CHEBI:78520"/>
        <dbReference type="ChEBI" id="CHEBI:78521"/>
        <dbReference type="ChEBI" id="CHEBI:456216"/>
    </reaction>
</comment>
<comment type="catalytic activity">
    <reaction evidence="1">
        <text>L-aspartyl-tRNA(Asn) + L-glutamine + ATP + H2O = L-asparaginyl-tRNA(Asn) + L-glutamate + ADP + phosphate + 2 H(+)</text>
        <dbReference type="Rhea" id="RHEA:14513"/>
        <dbReference type="Rhea" id="RHEA-COMP:9674"/>
        <dbReference type="Rhea" id="RHEA-COMP:9677"/>
        <dbReference type="ChEBI" id="CHEBI:15377"/>
        <dbReference type="ChEBI" id="CHEBI:15378"/>
        <dbReference type="ChEBI" id="CHEBI:29985"/>
        <dbReference type="ChEBI" id="CHEBI:30616"/>
        <dbReference type="ChEBI" id="CHEBI:43474"/>
        <dbReference type="ChEBI" id="CHEBI:58359"/>
        <dbReference type="ChEBI" id="CHEBI:78515"/>
        <dbReference type="ChEBI" id="CHEBI:78516"/>
        <dbReference type="ChEBI" id="CHEBI:456216"/>
    </reaction>
</comment>
<comment type="subunit">
    <text evidence="1">Heterotrimer of A, B and C subunits.</text>
</comment>
<comment type="similarity">
    <text evidence="1">Belongs to the GatB/GatE family. GatB subfamily.</text>
</comment>